<protein>
    <recommendedName>
        <fullName evidence="1 4">GTPase Era</fullName>
    </recommendedName>
</protein>
<evidence type="ECO:0000255" key="1">
    <source>
        <dbReference type="HAMAP-Rule" id="MF_00367"/>
    </source>
</evidence>
<evidence type="ECO:0000269" key="2">
    <source>
    </source>
</evidence>
<evidence type="ECO:0000303" key="3">
    <source>
    </source>
</evidence>
<evidence type="ECO:0000305" key="4"/>
<evidence type="ECO:0000312" key="5">
    <source>
        <dbReference type="EMBL" id="ABK76178.1"/>
    </source>
</evidence>
<evidence type="ECO:0000312" key="6">
    <source>
        <dbReference type="EMBL" id="AFP40836.1"/>
    </source>
</evidence>
<proteinExistence type="evidence at protein level"/>
<sequence length="299" mass="32993">MTEFRSGFVCFVGRPNTGKSTLTNALVGQKVAITSNRPQTTRHTIRGIVHREDFQIILVDTPGLHRPRTLLGQRLNDLVKDTYSEVDVIGMCIPADEAIGPGDRWIYQQIRAVAPRTTLIGIVTKIDKVPKDRVAAQLLAVSELMGPDAEIVPVSATSGEQLDVLTNVLVSQLPPGPAYYPDGELTDEPEEVLMAELIREAALEGVRDELPHSLAVVIDEVSQREDRDDLIDVHAILYVERDSQKGIVIGKGGARLREVGTAARKQIEKLLGTKVYLDLRVKIAKNWQRDPKQLGKLGF</sequence>
<comment type="function">
    <text evidence="2">Exhibits GTPase activity (PubMed:35917161). Binds RNA but is probably not involved in ribosome assembly in mycobacteria (PubMed:35917161). Cannot use ATP (PubMed:35917161).</text>
</comment>
<comment type="activity regulation">
    <text evidence="2">Co-purified with RNA upon overexpression in E.coli, but RNAs do not appear to influence the GTPase activity.</text>
</comment>
<comment type="biophysicochemical properties">
    <kinetics>
        <KM evidence="2">285 uM for GTP</KM>
    </kinetics>
</comment>
<comment type="subunit">
    <text evidence="2">Monomer (PubMed:35917161). Stays in the monomer conformation, irrespective of the presence of GTP (PubMed:35917161).</text>
</comment>
<comment type="subcellular location">
    <subcellularLocation>
        <location evidence="1">Cell envelope</location>
    </subcellularLocation>
    <subcellularLocation>
        <location evidence="1">Secreted</location>
        <location evidence="1">Cell wall</location>
    </subcellularLocation>
</comment>
<comment type="disruption phenotype">
    <text evidence="2">Deletion of C-terminal KH domain, which is responsible for association of protein with the RNA, does not affect the GTPase activity.</text>
</comment>
<comment type="similarity">
    <text evidence="1">Belongs to the TRAFAC class TrmE-Era-EngA-EngB-Septin-like GTPase superfamily. Era GTPase family.</text>
</comment>
<comment type="sequence caution" evidence="4">
    <conflict type="erroneous initiation">
        <sequence resource="EMBL-CDS" id="ABK76178"/>
    </conflict>
    <text>Extended N-terminus.</text>
</comment>
<reference key="1">
    <citation type="submission" date="2006-10" db="EMBL/GenBank/DDBJ databases">
        <authorList>
            <person name="Fleischmann R.D."/>
            <person name="Dodson R.J."/>
            <person name="Haft D.H."/>
            <person name="Merkel J.S."/>
            <person name="Nelson W.C."/>
            <person name="Fraser C.M."/>
        </authorList>
    </citation>
    <scope>NUCLEOTIDE SEQUENCE [LARGE SCALE GENOMIC DNA]</scope>
    <source>
        <strain>ATCC 700084 / mc(2)155</strain>
    </source>
</reference>
<reference key="2">
    <citation type="journal article" date="2007" name="Genome Biol.">
        <title>Interrupted coding sequences in Mycobacterium smegmatis: authentic mutations or sequencing errors?</title>
        <authorList>
            <person name="Deshayes C."/>
            <person name="Perrodou E."/>
            <person name="Gallien S."/>
            <person name="Euphrasie D."/>
            <person name="Schaeffer C."/>
            <person name="Van-Dorsselaer A."/>
            <person name="Poch O."/>
            <person name="Lecompte O."/>
            <person name="Reyrat J.-M."/>
        </authorList>
    </citation>
    <scope>NUCLEOTIDE SEQUENCE [LARGE SCALE GENOMIC DNA]</scope>
    <source>
        <strain>ATCC 700084 / mc(2)155</strain>
    </source>
</reference>
<reference key="3">
    <citation type="journal article" date="2009" name="Genome Res.">
        <title>Ortho-proteogenomics: multiple proteomes investigation through orthology and a new MS-based protocol.</title>
        <authorList>
            <person name="Gallien S."/>
            <person name="Perrodou E."/>
            <person name="Carapito C."/>
            <person name="Deshayes C."/>
            <person name="Reyrat J.-M."/>
            <person name="Van Dorsselaer A."/>
            <person name="Poch O."/>
            <person name="Schaeffer C."/>
            <person name="Lecompte O."/>
        </authorList>
    </citation>
    <scope>NUCLEOTIDE SEQUENCE [LARGE SCALE GENOMIC DNA]</scope>
    <source>
        <strain>ATCC 700084 / mc(2)155</strain>
    </source>
</reference>
<reference key="4">
    <citation type="journal article" date="2022" name="Microbiology">
        <title>Era, a GTPase-like protein of the Ras family, does not control ribosome assembly in Mycobacterium tuberculosis.</title>
        <authorList>
            <person name="Agarwal N."/>
            <person name="Sharma S."/>
            <person name="Pal P."/>
            <person name="Kaushal P.S."/>
            <person name="Kumar N."/>
        </authorList>
    </citation>
    <scope>FUNCTION</scope>
    <scope>ACTIVITY REGULATION</scope>
    <scope>BIOPHYSICOCHEMICAL PROPERTIES</scope>
    <scope>SUBUNIT</scope>
    <scope>DISRUPTION PHENOTYPE</scope>
</reference>
<feature type="chain" id="PRO_0000457180" description="GTPase Era">
    <location>
        <begin position="1"/>
        <end position="299"/>
    </location>
</feature>
<feature type="domain" description="Era-type G" evidence="1">
    <location>
        <begin position="5"/>
        <end position="175"/>
    </location>
</feature>
<feature type="domain" description="KH type-2" evidence="1">
    <location>
        <begin position="206"/>
        <end position="285"/>
    </location>
</feature>
<feature type="region of interest" description="G1" evidence="1">
    <location>
        <begin position="13"/>
        <end position="20"/>
    </location>
</feature>
<feature type="region of interest" description="G2" evidence="1">
    <location>
        <begin position="39"/>
        <end position="43"/>
    </location>
</feature>
<feature type="region of interest" description="G3" evidence="1">
    <location>
        <begin position="60"/>
        <end position="63"/>
    </location>
</feature>
<feature type="region of interest" description="G4" evidence="1">
    <location>
        <begin position="124"/>
        <end position="127"/>
    </location>
</feature>
<feature type="region of interest" description="G5" evidence="1">
    <location>
        <begin position="154"/>
        <end position="156"/>
    </location>
</feature>
<feature type="binding site" evidence="1">
    <location>
        <begin position="13"/>
        <end position="20"/>
    </location>
    <ligand>
        <name>GTP</name>
        <dbReference type="ChEBI" id="CHEBI:37565"/>
    </ligand>
</feature>
<feature type="binding site" evidence="1">
    <location>
        <begin position="60"/>
        <end position="64"/>
    </location>
    <ligand>
        <name>GTP</name>
        <dbReference type="ChEBI" id="CHEBI:37565"/>
    </ligand>
</feature>
<feature type="binding site" evidence="1">
    <location>
        <begin position="124"/>
        <end position="127"/>
    </location>
    <ligand>
        <name>GTP</name>
        <dbReference type="ChEBI" id="CHEBI:37565"/>
    </ligand>
</feature>
<keyword id="KW-0134">Cell wall</keyword>
<keyword id="KW-0342">GTP-binding</keyword>
<keyword id="KW-0547">Nucleotide-binding</keyword>
<keyword id="KW-1185">Reference proteome</keyword>
<keyword id="KW-0694">RNA-binding</keyword>
<keyword id="KW-0964">Secreted</keyword>
<accession>A0R0S7</accession>
<accession>I7GCB1</accession>
<name>ERA_MYCS2</name>
<gene>
    <name evidence="1 3" type="primary">era</name>
    <name evidence="5" type="ordered locus">MSMEG_4493</name>
    <name evidence="6" type="ordered locus">MSMEI_4382</name>
</gene>
<organism>
    <name type="scientific">Mycolicibacterium smegmatis (strain ATCC 700084 / mc(2)155)</name>
    <name type="common">Mycobacterium smegmatis</name>
    <dbReference type="NCBI Taxonomy" id="246196"/>
    <lineage>
        <taxon>Bacteria</taxon>
        <taxon>Bacillati</taxon>
        <taxon>Actinomycetota</taxon>
        <taxon>Actinomycetes</taxon>
        <taxon>Mycobacteriales</taxon>
        <taxon>Mycobacteriaceae</taxon>
        <taxon>Mycolicibacterium</taxon>
    </lineage>
</organism>
<dbReference type="EMBL" id="CP000480">
    <property type="protein sequence ID" value="ABK76178.1"/>
    <property type="status" value="ALT_INIT"/>
    <property type="molecule type" value="Genomic_DNA"/>
</dbReference>
<dbReference type="EMBL" id="CP001663">
    <property type="protein sequence ID" value="AFP40836.1"/>
    <property type="molecule type" value="Genomic_DNA"/>
</dbReference>
<dbReference type="RefSeq" id="WP_003895864.1">
    <property type="nucleotide sequence ID" value="NZ_SIJM01000026.1"/>
</dbReference>
<dbReference type="RefSeq" id="YP_888765.1">
    <property type="nucleotide sequence ID" value="NC_008596.1"/>
</dbReference>
<dbReference type="SMR" id="A0R0S7"/>
<dbReference type="STRING" id="246196.MSMEG_4493"/>
<dbReference type="PaxDb" id="246196-MSMEI_4382"/>
<dbReference type="PRIDE" id="A0R0S7"/>
<dbReference type="GeneID" id="93459196"/>
<dbReference type="KEGG" id="msb:LJ00_22230"/>
<dbReference type="KEGG" id="msg:MSMEI_4382"/>
<dbReference type="KEGG" id="msm:MSMEG_4493"/>
<dbReference type="PATRIC" id="fig|246196.19.peg.4399"/>
<dbReference type="eggNOG" id="COG1159">
    <property type="taxonomic scope" value="Bacteria"/>
</dbReference>
<dbReference type="OrthoDB" id="9805918at2"/>
<dbReference type="Proteomes" id="UP000000757">
    <property type="component" value="Chromosome"/>
</dbReference>
<dbReference type="Proteomes" id="UP000006158">
    <property type="component" value="Chromosome"/>
</dbReference>
<dbReference type="GO" id="GO:0030313">
    <property type="term" value="C:cell envelope"/>
    <property type="evidence" value="ECO:0007669"/>
    <property type="project" value="UniProtKB-SubCell"/>
</dbReference>
<dbReference type="GO" id="GO:0005829">
    <property type="term" value="C:cytosol"/>
    <property type="evidence" value="ECO:0007669"/>
    <property type="project" value="TreeGrafter"/>
</dbReference>
<dbReference type="GO" id="GO:0005576">
    <property type="term" value="C:extracellular region"/>
    <property type="evidence" value="ECO:0007669"/>
    <property type="project" value="UniProtKB-KW"/>
</dbReference>
<dbReference type="GO" id="GO:0005525">
    <property type="term" value="F:GTP binding"/>
    <property type="evidence" value="ECO:0007669"/>
    <property type="project" value="UniProtKB-UniRule"/>
</dbReference>
<dbReference type="GO" id="GO:0003924">
    <property type="term" value="F:GTPase activity"/>
    <property type="evidence" value="ECO:0007669"/>
    <property type="project" value="UniProtKB-UniRule"/>
</dbReference>
<dbReference type="GO" id="GO:0043024">
    <property type="term" value="F:ribosomal small subunit binding"/>
    <property type="evidence" value="ECO:0007669"/>
    <property type="project" value="TreeGrafter"/>
</dbReference>
<dbReference type="GO" id="GO:0019843">
    <property type="term" value="F:rRNA binding"/>
    <property type="evidence" value="ECO:0007669"/>
    <property type="project" value="TreeGrafter"/>
</dbReference>
<dbReference type="GO" id="GO:0000028">
    <property type="term" value="P:ribosomal small subunit assembly"/>
    <property type="evidence" value="ECO:0007669"/>
    <property type="project" value="TreeGrafter"/>
</dbReference>
<dbReference type="CDD" id="cd04163">
    <property type="entry name" value="Era"/>
    <property type="match status" value="1"/>
</dbReference>
<dbReference type="CDD" id="cd22534">
    <property type="entry name" value="KH-II_Era"/>
    <property type="match status" value="1"/>
</dbReference>
<dbReference type="FunFam" id="3.30.300.20:FF:000003">
    <property type="entry name" value="GTPase Era"/>
    <property type="match status" value="1"/>
</dbReference>
<dbReference type="FunFam" id="3.40.50.300:FF:000094">
    <property type="entry name" value="GTPase Era"/>
    <property type="match status" value="1"/>
</dbReference>
<dbReference type="Gene3D" id="3.30.300.20">
    <property type="match status" value="1"/>
</dbReference>
<dbReference type="Gene3D" id="3.40.50.300">
    <property type="entry name" value="P-loop containing nucleotide triphosphate hydrolases"/>
    <property type="match status" value="1"/>
</dbReference>
<dbReference type="HAMAP" id="MF_00367">
    <property type="entry name" value="GTPase_Era"/>
    <property type="match status" value="1"/>
</dbReference>
<dbReference type="InterPro" id="IPR030388">
    <property type="entry name" value="G_ERA_dom"/>
</dbReference>
<dbReference type="InterPro" id="IPR006073">
    <property type="entry name" value="GTP-bd"/>
</dbReference>
<dbReference type="InterPro" id="IPR005662">
    <property type="entry name" value="GTPase_Era-like"/>
</dbReference>
<dbReference type="InterPro" id="IPR015946">
    <property type="entry name" value="KH_dom-like_a/b"/>
</dbReference>
<dbReference type="InterPro" id="IPR004044">
    <property type="entry name" value="KH_dom_type_2"/>
</dbReference>
<dbReference type="InterPro" id="IPR009019">
    <property type="entry name" value="KH_sf_prok-type"/>
</dbReference>
<dbReference type="InterPro" id="IPR027417">
    <property type="entry name" value="P-loop_NTPase"/>
</dbReference>
<dbReference type="InterPro" id="IPR005225">
    <property type="entry name" value="Small_GTP-bd"/>
</dbReference>
<dbReference type="NCBIfam" id="TIGR00436">
    <property type="entry name" value="era"/>
    <property type="match status" value="1"/>
</dbReference>
<dbReference type="NCBIfam" id="NF000908">
    <property type="entry name" value="PRK00089.1"/>
    <property type="match status" value="1"/>
</dbReference>
<dbReference type="NCBIfam" id="TIGR00231">
    <property type="entry name" value="small_GTP"/>
    <property type="match status" value="1"/>
</dbReference>
<dbReference type="PANTHER" id="PTHR42698">
    <property type="entry name" value="GTPASE ERA"/>
    <property type="match status" value="1"/>
</dbReference>
<dbReference type="PANTHER" id="PTHR42698:SF1">
    <property type="entry name" value="GTPASE ERA, MITOCHONDRIAL"/>
    <property type="match status" value="1"/>
</dbReference>
<dbReference type="Pfam" id="PF07650">
    <property type="entry name" value="KH_2"/>
    <property type="match status" value="1"/>
</dbReference>
<dbReference type="Pfam" id="PF01926">
    <property type="entry name" value="MMR_HSR1"/>
    <property type="match status" value="1"/>
</dbReference>
<dbReference type="SUPFAM" id="SSF52540">
    <property type="entry name" value="P-loop containing nucleoside triphosphate hydrolases"/>
    <property type="match status" value="1"/>
</dbReference>
<dbReference type="SUPFAM" id="SSF54814">
    <property type="entry name" value="Prokaryotic type KH domain (KH-domain type II)"/>
    <property type="match status" value="1"/>
</dbReference>
<dbReference type="PROSITE" id="PS51713">
    <property type="entry name" value="G_ERA"/>
    <property type="match status" value="1"/>
</dbReference>
<dbReference type="PROSITE" id="PS50823">
    <property type="entry name" value="KH_TYPE_2"/>
    <property type="match status" value="1"/>
</dbReference>